<comment type="subcellular location">
    <subcellularLocation>
        <location evidence="4">Secreted</location>
    </subcellularLocation>
</comment>
<comment type="similarity">
    <text evidence="2">Belongs to the peptidase S1 family. Plasma kallikrein subfamily.</text>
</comment>
<comment type="caution">
    <text evidence="4">Although related to peptidase S1 family, lacks the essential His, Asp, and Ser residues of the catalytic triad at positions 73, 119 and 210 and is therefore predicted to have lost protease activity.</text>
</comment>
<gene>
    <name type="primary">Prss54</name>
    <name type="synonym">Klkbl4</name>
</gene>
<sequence length="383" mass="42758">MAEMRGMLLMLLYISHSSSAICGIQKATIADKLKENLVSSTEFPWVVSIQDKQYTHLAFGCILSEFWILSTASALQHRPEVIAVVGISNMDPRKTDHREYSVNTIIPHENFDNVSMGNNIALLKTESAMHFNDLVQAICFLGKKLHKPPALKNCWVAGWNPTSATGNHMTMSILRRISVKDIEVCPLRRHQKTECASHTKEPNNVCLGEPGSPMMCQAKKLDLWILRGLLAYGGDSCPGLFLYTSVADYSDWITAKTRKAGPSLSSLHLWEKLVFELPFHESNIALTTNSFSIHTYAEWPHSYSQGQRMSTKSNKQKDAGQNFRVNRQPETSGPSKVAIQPMYYDYYGGEAGEGGAVAGQNRLHWSQERILMSFVLVFLGSGV</sequence>
<feature type="signal peptide" evidence="1">
    <location>
        <begin position="1"/>
        <end position="20"/>
    </location>
</feature>
<feature type="chain" id="PRO_5000095973" description="Inactive serine protease 54">
    <location>
        <begin position="21"/>
        <end position="383"/>
    </location>
</feature>
<feature type="domain" description="Peptidase S1" evidence="2">
    <location>
        <begin position="21"/>
        <end position="258"/>
    </location>
</feature>
<feature type="region of interest" description="Disordered" evidence="3">
    <location>
        <begin position="305"/>
        <end position="334"/>
    </location>
</feature>
<feature type="compositionally biased region" description="Polar residues" evidence="3">
    <location>
        <begin position="323"/>
        <end position="334"/>
    </location>
</feature>
<feature type="glycosylation site" description="N-linked (GlcNAc...) asparagine" evidence="1">
    <location>
        <position position="113"/>
    </location>
</feature>
<feature type="disulfide bond" evidence="2">
    <location>
        <begin position="154"/>
        <end position="216"/>
    </location>
</feature>
<feature type="disulfide bond" evidence="2">
    <location>
        <begin position="185"/>
        <end position="195"/>
    </location>
</feature>
<feature type="disulfide bond" evidence="2">
    <location>
        <begin position="206"/>
        <end position="237"/>
    </location>
</feature>
<protein>
    <recommendedName>
        <fullName>Inactive serine protease 54</fullName>
    </recommendedName>
    <alternativeName>
        <fullName>Plasma kallikrein-like protein 4</fullName>
    </alternativeName>
</protein>
<proteinExistence type="evidence at transcript level"/>
<evidence type="ECO:0000255" key="1"/>
<evidence type="ECO:0000255" key="2">
    <source>
        <dbReference type="PROSITE-ProRule" id="PRU00274"/>
    </source>
</evidence>
<evidence type="ECO:0000256" key="3">
    <source>
        <dbReference type="SAM" id="MobiDB-lite"/>
    </source>
</evidence>
<evidence type="ECO:0000305" key="4"/>
<organism>
    <name type="scientific">Mus musculus</name>
    <name type="common">Mouse</name>
    <dbReference type="NCBI Taxonomy" id="10090"/>
    <lineage>
        <taxon>Eukaryota</taxon>
        <taxon>Metazoa</taxon>
        <taxon>Chordata</taxon>
        <taxon>Craniata</taxon>
        <taxon>Vertebrata</taxon>
        <taxon>Euteleostomi</taxon>
        <taxon>Mammalia</taxon>
        <taxon>Eutheria</taxon>
        <taxon>Euarchontoglires</taxon>
        <taxon>Glires</taxon>
        <taxon>Rodentia</taxon>
        <taxon>Myomorpha</taxon>
        <taxon>Muroidea</taxon>
        <taxon>Muridae</taxon>
        <taxon>Murinae</taxon>
        <taxon>Mus</taxon>
        <taxon>Mus</taxon>
    </lineage>
</organism>
<name>PRS54_MOUSE</name>
<reference key="1">
    <citation type="journal article" date="2009" name="PLoS Biol.">
        <title>Lineage-specific biology revealed by a finished genome assembly of the mouse.</title>
        <authorList>
            <person name="Church D.M."/>
            <person name="Goodstadt L."/>
            <person name="Hillier L.W."/>
            <person name="Zody M.C."/>
            <person name="Goldstein S."/>
            <person name="She X."/>
            <person name="Bult C.J."/>
            <person name="Agarwala R."/>
            <person name="Cherry J.L."/>
            <person name="DiCuccio M."/>
            <person name="Hlavina W."/>
            <person name="Kapustin Y."/>
            <person name="Meric P."/>
            <person name="Maglott D."/>
            <person name="Birtle Z."/>
            <person name="Marques A.C."/>
            <person name="Graves T."/>
            <person name="Zhou S."/>
            <person name="Teague B."/>
            <person name="Potamousis K."/>
            <person name="Churas C."/>
            <person name="Place M."/>
            <person name="Herschleb J."/>
            <person name="Runnheim R."/>
            <person name="Forrest D."/>
            <person name="Amos-Landgraf J."/>
            <person name="Schwartz D.C."/>
            <person name="Cheng Z."/>
            <person name="Lindblad-Toh K."/>
            <person name="Eichler E.E."/>
            <person name="Ponting C.P."/>
        </authorList>
    </citation>
    <scope>NUCLEOTIDE SEQUENCE [LARGE SCALE GENOMIC DNA]</scope>
    <source>
        <strain>C57BL/6J</strain>
    </source>
</reference>
<reference key="2">
    <citation type="journal article" date="2003" name="Nat. Rev. Genet.">
        <title>Human and mouse proteases: a comparative genomic approach.</title>
        <authorList>
            <person name="Puente X.S."/>
            <person name="Sanchez L.M."/>
            <person name="Overall C.M."/>
            <person name="Lopez-Otin C."/>
        </authorList>
    </citation>
    <scope>IDENTIFICATION</scope>
    <source>
        <strain>C57BL/6J</strain>
    </source>
</reference>
<keyword id="KW-1015">Disulfide bond</keyword>
<keyword id="KW-0325">Glycoprotein</keyword>
<keyword id="KW-1185">Reference proteome</keyword>
<keyword id="KW-0964">Secreted</keyword>
<keyword id="KW-0721">Serine protease homolog</keyword>
<keyword id="KW-0732">Signal</keyword>
<dbReference type="EMBL" id="AC102555">
    <property type="status" value="NOT_ANNOTATED_CDS"/>
    <property type="molecule type" value="Genomic_DNA"/>
</dbReference>
<dbReference type="EMBL" id="CAAA01187779">
    <property type="status" value="NOT_ANNOTATED_CDS"/>
    <property type="molecule type" value="Genomic_DNA"/>
</dbReference>
<dbReference type="EMBL" id="BN000132">
    <property type="protein sequence ID" value="CAD67595.1"/>
    <property type="molecule type" value="mRNA"/>
</dbReference>
<dbReference type="CCDS" id="CCDS80916.1"/>
<dbReference type="RefSeq" id="NP_081916.1">
    <property type="nucleotide sequence ID" value="NM_027640.1"/>
</dbReference>
<dbReference type="SMR" id="Q7M756"/>
<dbReference type="FunCoup" id="Q7M756">
    <property type="interactions" value="51"/>
</dbReference>
<dbReference type="STRING" id="10090.ENSMUSP00000058859"/>
<dbReference type="MEROPS" id="S01.992"/>
<dbReference type="GlyCosmos" id="Q7M756">
    <property type="glycosylation" value="1 site, No reported glycans"/>
</dbReference>
<dbReference type="GlyGen" id="Q7M756">
    <property type="glycosylation" value="1 site"/>
</dbReference>
<dbReference type="PaxDb" id="10090-ENSMUSP00000058859"/>
<dbReference type="ProteomicsDB" id="291804"/>
<dbReference type="Antibodypedia" id="29072">
    <property type="antibodies" value="83 antibodies from 15 providers"/>
</dbReference>
<dbReference type="Ensembl" id="ENSMUST00000180075.2">
    <property type="protein sequence ID" value="ENSMUSP00000137577.2"/>
    <property type="gene ID" value="ENSMUSG00000048400.14"/>
</dbReference>
<dbReference type="Ensembl" id="ENSMUST00000213096.2">
    <property type="protein sequence ID" value="ENSMUSP00000148608.2"/>
    <property type="gene ID" value="ENSMUSG00000048400.14"/>
</dbReference>
<dbReference type="UCSC" id="uc009myo.1">
    <property type="organism name" value="mouse"/>
</dbReference>
<dbReference type="AGR" id="MGI:1918243"/>
<dbReference type="MGI" id="MGI:1918243">
    <property type="gene designation" value="Prss54"/>
</dbReference>
<dbReference type="VEuPathDB" id="HostDB:ENSMUSG00000048400"/>
<dbReference type="eggNOG" id="KOG3627">
    <property type="taxonomic scope" value="Eukaryota"/>
</dbReference>
<dbReference type="GeneTree" id="ENSGT01020000230389"/>
<dbReference type="InParanoid" id="Q7M756"/>
<dbReference type="PhylomeDB" id="Q7M756"/>
<dbReference type="BioGRID-ORCS" id="70993">
    <property type="hits" value="0 hits in 78 CRISPR screens"/>
</dbReference>
<dbReference type="PRO" id="PR:Q7M756"/>
<dbReference type="Proteomes" id="UP000000589">
    <property type="component" value="Chromosome 8"/>
</dbReference>
<dbReference type="RNAct" id="Q7M756">
    <property type="molecule type" value="protein"/>
</dbReference>
<dbReference type="Bgee" id="ENSMUSG00000048400">
    <property type="expression patterns" value="Expressed in spermatid and 10 other cell types or tissues"/>
</dbReference>
<dbReference type="ExpressionAtlas" id="Q7M756">
    <property type="expression patterns" value="baseline and differential"/>
</dbReference>
<dbReference type="GO" id="GO:0005576">
    <property type="term" value="C:extracellular region"/>
    <property type="evidence" value="ECO:0007669"/>
    <property type="project" value="UniProtKB-SubCell"/>
</dbReference>
<dbReference type="GO" id="GO:0004252">
    <property type="term" value="F:serine-type endopeptidase activity"/>
    <property type="evidence" value="ECO:0007669"/>
    <property type="project" value="InterPro"/>
</dbReference>
<dbReference type="GO" id="GO:0006508">
    <property type="term" value="P:proteolysis"/>
    <property type="evidence" value="ECO:0007669"/>
    <property type="project" value="InterPro"/>
</dbReference>
<dbReference type="CDD" id="cd00190">
    <property type="entry name" value="Tryp_SPc"/>
    <property type="match status" value="1"/>
</dbReference>
<dbReference type="FunFam" id="2.40.10.10:FF:000125">
    <property type="entry name" value="inactive serine protease 54"/>
    <property type="match status" value="1"/>
</dbReference>
<dbReference type="Gene3D" id="2.40.10.10">
    <property type="entry name" value="Trypsin-like serine proteases"/>
    <property type="match status" value="1"/>
</dbReference>
<dbReference type="InterPro" id="IPR009003">
    <property type="entry name" value="Peptidase_S1_PA"/>
</dbReference>
<dbReference type="InterPro" id="IPR043504">
    <property type="entry name" value="Peptidase_S1_PA_chymotrypsin"/>
</dbReference>
<dbReference type="InterPro" id="IPR001254">
    <property type="entry name" value="Trypsin_dom"/>
</dbReference>
<dbReference type="PANTHER" id="PTHR24250">
    <property type="entry name" value="CHYMOTRYPSIN-RELATED"/>
    <property type="match status" value="1"/>
</dbReference>
<dbReference type="PANTHER" id="PTHR24250:SF45">
    <property type="entry name" value="INACTIVE SERINE PROTEASE 54"/>
    <property type="match status" value="1"/>
</dbReference>
<dbReference type="Pfam" id="PF00089">
    <property type="entry name" value="Trypsin"/>
    <property type="match status" value="1"/>
</dbReference>
<dbReference type="SMART" id="SM00020">
    <property type="entry name" value="Tryp_SPc"/>
    <property type="match status" value="1"/>
</dbReference>
<dbReference type="SUPFAM" id="SSF50494">
    <property type="entry name" value="Trypsin-like serine proteases"/>
    <property type="match status" value="1"/>
</dbReference>
<dbReference type="PROSITE" id="PS50240">
    <property type="entry name" value="TRYPSIN_DOM"/>
    <property type="match status" value="1"/>
</dbReference>
<accession>Q7M756</accession>